<accession>E2A6Z3</accession>
<gene>
    <name evidence="8" type="ORF">EAG_07220</name>
</gene>
<comment type="function">
    <text evidence="1">Inhibits juvenile hormone biosynthesis.</text>
</comment>
<comment type="subcellular location">
    <subcellularLocation>
        <location evidence="7">Secreted</location>
    </subcellularLocation>
</comment>
<comment type="mass spectrometry">
    <molecule>Peptide LRSQLDIGDLQ</molecule>
</comment>
<proteinExistence type="evidence at protein level"/>
<reference key="1">
    <citation type="journal article" date="2010" name="Science">
        <title>Genomic comparison of the ants Camponotus floridanus and Harpegnathos saltator.</title>
        <authorList>
            <person name="Bonasio R."/>
            <person name="Zhang G."/>
            <person name="Ye C."/>
            <person name="Mutti N.S."/>
            <person name="Fang X."/>
            <person name="Qin N."/>
            <person name="Donahue G."/>
            <person name="Yang P."/>
            <person name="Li Q."/>
            <person name="Li C."/>
            <person name="Zhang P."/>
            <person name="Huang Z."/>
            <person name="Berger S.L."/>
            <person name="Reinberg D."/>
            <person name="Wang J."/>
            <person name="Liebig J."/>
        </authorList>
    </citation>
    <scope>NUCLEOTIDE SEQUENCE [LARGE SCALE GENOMIC DNA]</scope>
</reference>
<reference evidence="6" key="2">
    <citation type="journal article" date="2015" name="J. Proteome Res.">
        <title>Neuropeptidomics of the carpenter ant Camponotus floridanus.</title>
        <authorList>
            <person name="Schmitt F."/>
            <person name="Vanselow J.T."/>
            <person name="Schlosser A."/>
            <person name="Kahnt J."/>
            <person name="Roessler W."/>
            <person name="Wegener C."/>
        </authorList>
    </citation>
    <scope>PROTEIN SEQUENCE OF 64-74</scope>
    <scope>MASS SPECTROMETRY</scope>
    <scope>IDENTIFICATION BY MASS SPECTROMETRY</scope>
</reference>
<evidence type="ECO:0000250" key="1">
    <source>
        <dbReference type="UniProtKB" id="P42559"/>
    </source>
</evidence>
<evidence type="ECO:0000250" key="2">
    <source>
        <dbReference type="UniProtKB" id="P85798"/>
    </source>
</evidence>
<evidence type="ECO:0000255" key="3"/>
<evidence type="ECO:0000269" key="4">
    <source>
    </source>
</evidence>
<evidence type="ECO:0000303" key="5">
    <source>
    </source>
</evidence>
<evidence type="ECO:0000305" key="6"/>
<evidence type="ECO:0000305" key="7">
    <source>
    </source>
</evidence>
<evidence type="ECO:0000312" key="8">
    <source>
        <dbReference type="EMBL" id="EFN70796.1"/>
    </source>
</evidence>
<keyword id="KW-0165">Cleavage on pair of basic residues</keyword>
<keyword id="KW-0903">Direct protein sequencing</keyword>
<keyword id="KW-1015">Disulfide bond</keyword>
<keyword id="KW-1185">Reference proteome</keyword>
<keyword id="KW-0964">Secreted</keyword>
<keyword id="KW-0732">Signal</keyword>
<organism>
    <name type="scientific">Camponotus floridanus</name>
    <name type="common">Florida carpenter ant</name>
    <dbReference type="NCBI Taxonomy" id="104421"/>
    <lineage>
        <taxon>Eukaryota</taxon>
        <taxon>Metazoa</taxon>
        <taxon>Ecdysozoa</taxon>
        <taxon>Arthropoda</taxon>
        <taxon>Hexapoda</taxon>
        <taxon>Insecta</taxon>
        <taxon>Pterygota</taxon>
        <taxon>Neoptera</taxon>
        <taxon>Endopterygota</taxon>
        <taxon>Hymenoptera</taxon>
        <taxon>Apocrita</taxon>
        <taxon>Aculeata</taxon>
        <taxon>Formicoidea</taxon>
        <taxon>Formicidae</taxon>
        <taxon>Formicinae</taxon>
        <taxon>Camponotus</taxon>
    </lineage>
</organism>
<dbReference type="EMBL" id="GL437208">
    <property type="protein sequence ID" value="EFN70796.1"/>
    <property type="molecule type" value="Genomic_DNA"/>
</dbReference>
<dbReference type="EnsemblMetazoa" id="XM_011254326.3">
    <property type="protein sequence ID" value="XP_011252628.1"/>
    <property type="gene ID" value="LOC105249103"/>
</dbReference>
<dbReference type="KEGG" id="cfo:105249103"/>
<dbReference type="OMA" id="YWRQCAF"/>
<dbReference type="OrthoDB" id="6410451at2759"/>
<dbReference type="Proteomes" id="UP000000311">
    <property type="component" value="Unassembled WGS sequence"/>
</dbReference>
<dbReference type="GO" id="GO:0005576">
    <property type="term" value="C:extracellular region"/>
    <property type="evidence" value="ECO:0007669"/>
    <property type="project" value="UniProtKB-SubCell"/>
</dbReference>
<feature type="signal peptide" evidence="3">
    <location>
        <begin position="1"/>
        <end position="23"/>
    </location>
</feature>
<feature type="propeptide" id="PRO_0000434182" evidence="7">
    <location>
        <begin position="24"/>
        <end position="61"/>
    </location>
</feature>
<feature type="peptide" id="PRO_0000434183" description="Peptide LRSQLDIGDLQ" evidence="4">
    <location>
        <begin position="64"/>
        <end position="74"/>
    </location>
</feature>
<feature type="peptide" id="PRO_0000434184" description="Allatostatin C" evidence="2">
    <location>
        <begin position="78"/>
        <end position="91"/>
    </location>
</feature>
<feature type="disulfide bond" evidence="2">
    <location>
        <begin position="83"/>
        <end position="90"/>
    </location>
</feature>
<protein>
    <recommendedName>
        <fullName evidence="5">Allatostatin C</fullName>
    </recommendedName>
    <component>
        <recommendedName>
            <fullName evidence="5">Peptide LRSQLDIGDLQ</fullName>
        </recommendedName>
    </component>
    <component>
        <recommendedName>
            <fullName evidence="5">Allatostatin C</fullName>
            <shortName evidence="2">SYWKQCAFNAVSCF-amide</shortName>
        </recommendedName>
    </component>
</protein>
<name>ALLSC_CAMFO</name>
<sequence>MSSVRNIAALALVLLVLAEWSAAMPTTDKDKERLLNTVDLIDDDGSIETALINYLFTKQIVKRLRSQLDIGDLQRKRSYWKQCAFNAVSCFGK</sequence>